<accession>P47285</accession>
<comment type="function">
    <text evidence="1">Catalyzes the oxidation of glycerol 3-phosphate to dihydroxyacetone phosphate (DHAP), with a reduction of O2 to H2O2. The formation of hydrogen peroxide by this enzyme is crucial for cytotoxic effects on host cells. Does not show any dehydrogenase activity with NAD(+).</text>
</comment>
<comment type="catalytic activity">
    <reaction evidence="1">
        <text>sn-glycerol 3-phosphate + O2 = dihydroxyacetone phosphate + H2O2</text>
        <dbReference type="Rhea" id="RHEA:18369"/>
        <dbReference type="ChEBI" id="CHEBI:15379"/>
        <dbReference type="ChEBI" id="CHEBI:16240"/>
        <dbReference type="ChEBI" id="CHEBI:57597"/>
        <dbReference type="ChEBI" id="CHEBI:57642"/>
        <dbReference type="EC" id="1.1.3.21"/>
    </reaction>
    <physiologicalReaction direction="left-to-right" evidence="1">
        <dbReference type="Rhea" id="RHEA:18370"/>
    </physiologicalReaction>
</comment>
<comment type="cofactor">
    <cofactor evidence="1">
        <name>FAD</name>
        <dbReference type="ChEBI" id="CHEBI:57692"/>
    </cofactor>
</comment>
<comment type="pathway">
    <text evidence="1">Polyol metabolism; glycerol degradation via glycerol kinase pathway; glycerone phosphate from sn-glycerol 3-phosphate (aerobic route): step 1/1.</text>
</comment>
<comment type="subunit">
    <text evidence="1">Monomer.</text>
</comment>
<comment type="subcellular location">
    <subcellularLocation>
        <location evidence="1">Cytoplasm</location>
    </subcellularLocation>
    <subcellularLocation>
        <location evidence="1 2">Cell membrane</location>
        <topology evidence="2">Lipid-anchor</topology>
    </subcellularLocation>
</comment>
<organism>
    <name type="scientific">Mycoplasma genitalium (strain ATCC 33530 / DSM 19775 / NCTC 10195 / G37)</name>
    <name type="common">Mycoplasmoides genitalium</name>
    <dbReference type="NCBI Taxonomy" id="243273"/>
    <lineage>
        <taxon>Bacteria</taxon>
        <taxon>Bacillati</taxon>
        <taxon>Mycoplasmatota</taxon>
        <taxon>Mycoplasmoidales</taxon>
        <taxon>Mycoplasmoidaceae</taxon>
        <taxon>Mycoplasmoides</taxon>
    </lineage>
</organism>
<keyword id="KW-1003">Cell membrane</keyword>
<keyword id="KW-0963">Cytoplasm</keyword>
<keyword id="KW-0274">FAD</keyword>
<keyword id="KW-0285">Flavoprotein</keyword>
<keyword id="KW-0319">Glycerol metabolism</keyword>
<keyword id="KW-0449">Lipoprotein</keyword>
<keyword id="KW-0472">Membrane</keyword>
<keyword id="KW-0560">Oxidoreductase</keyword>
<keyword id="KW-0564">Palmitate</keyword>
<keyword id="KW-1185">Reference proteome</keyword>
<keyword id="KW-0732">Signal</keyword>
<keyword id="KW-0843">Virulence</keyword>
<reference key="1">
    <citation type="journal article" date="1995" name="Science">
        <title>The minimal gene complement of Mycoplasma genitalium.</title>
        <authorList>
            <person name="Fraser C.M."/>
            <person name="Gocayne J.D."/>
            <person name="White O."/>
            <person name="Adams M.D."/>
            <person name="Clayton R.A."/>
            <person name="Fleischmann R.D."/>
            <person name="Bult C.J."/>
            <person name="Kerlavage A.R."/>
            <person name="Sutton G.G."/>
            <person name="Kelley J.M."/>
            <person name="Fritchman J.L."/>
            <person name="Weidman J.F."/>
            <person name="Small K.V."/>
            <person name="Sandusky M."/>
            <person name="Fuhrmann J.L."/>
            <person name="Nguyen D.T."/>
            <person name="Utterback T.R."/>
            <person name="Saudek D.M."/>
            <person name="Phillips C.A."/>
            <person name="Merrick J.M."/>
            <person name="Tomb J.-F."/>
            <person name="Dougherty B.A."/>
            <person name="Bott K.F."/>
            <person name="Hu P.-C."/>
            <person name="Lucier T.S."/>
            <person name="Peterson S.N."/>
            <person name="Smith H.O."/>
            <person name="Hutchison C.A. III"/>
            <person name="Venter J.C."/>
        </authorList>
    </citation>
    <scope>NUCLEOTIDE SEQUENCE [LARGE SCALE GENOMIC DNA]</scope>
    <source>
        <strain>ATCC 33530 / DSM 19775 / NCTC 10195 / G37</strain>
    </source>
</reference>
<gene>
    <name type="ordered locus">MG039</name>
</gene>
<feature type="signal peptide" evidence="2">
    <location>
        <begin position="1"/>
        <end position="17"/>
    </location>
</feature>
<feature type="chain" id="PRO_0000210395" description="Glycerol 3-phosphate oxidase" evidence="2">
    <location>
        <begin position="18"/>
        <end position="384"/>
    </location>
</feature>
<feature type="active site" description="Proton acceptor" evidence="1">
    <location>
        <position position="51"/>
    </location>
</feature>
<feature type="binding site" evidence="1">
    <location>
        <position position="14"/>
    </location>
    <ligand>
        <name>FAD</name>
        <dbReference type="ChEBI" id="CHEBI:57692"/>
    </ligand>
</feature>
<feature type="binding site" evidence="1">
    <location>
        <position position="33"/>
    </location>
    <ligand>
        <name>FAD</name>
        <dbReference type="ChEBI" id="CHEBI:57692"/>
    </ligand>
</feature>
<feature type="binding site" evidence="1">
    <location>
        <begin position="42"/>
        <end position="43"/>
    </location>
    <ligand>
        <name>FAD</name>
        <dbReference type="ChEBI" id="CHEBI:57692"/>
    </ligand>
</feature>
<feature type="binding site" evidence="1">
    <location>
        <begin position="47"/>
        <end position="49"/>
    </location>
    <ligand>
        <name>FAD</name>
        <dbReference type="ChEBI" id="CHEBI:57692"/>
    </ligand>
</feature>
<feature type="binding site" evidence="1">
    <location>
        <position position="47"/>
    </location>
    <ligand>
        <name>sn-glycerol 3-phosphate</name>
        <dbReference type="ChEBI" id="CHEBI:57597"/>
    </ligand>
</feature>
<feature type="binding site" evidence="1">
    <location>
        <position position="51"/>
    </location>
    <ligand>
        <name>sn-glycerol 3-phosphate</name>
        <dbReference type="ChEBI" id="CHEBI:57597"/>
    </ligand>
</feature>
<feature type="binding site" evidence="1">
    <location>
        <position position="177"/>
    </location>
    <ligand>
        <name>FAD</name>
        <dbReference type="ChEBI" id="CHEBI:57692"/>
    </ligand>
</feature>
<feature type="binding site" evidence="1">
    <location>
        <position position="258"/>
    </location>
    <ligand>
        <name>sn-glycerol 3-phosphate</name>
        <dbReference type="ChEBI" id="CHEBI:57597"/>
    </ligand>
</feature>
<feature type="binding site" evidence="1">
    <location>
        <position position="320"/>
    </location>
    <ligand>
        <name>sn-glycerol 3-phosphate</name>
        <dbReference type="ChEBI" id="CHEBI:57597"/>
    </ligand>
</feature>
<feature type="binding site" evidence="1">
    <location>
        <begin position="346"/>
        <end position="347"/>
    </location>
    <ligand>
        <name>FAD</name>
        <dbReference type="ChEBI" id="CHEBI:57692"/>
    </ligand>
</feature>
<feature type="binding site" evidence="1">
    <location>
        <position position="348"/>
    </location>
    <ligand>
        <name>sn-glycerol 3-phosphate</name>
        <dbReference type="ChEBI" id="CHEBI:57597"/>
    </ligand>
</feature>
<feature type="binding site" evidence="1">
    <location>
        <position position="352"/>
    </location>
    <ligand>
        <name>FAD</name>
        <dbReference type="ChEBI" id="CHEBI:57692"/>
    </ligand>
</feature>
<feature type="lipid moiety-binding region" description="N-palmitoyl cysteine" evidence="2">
    <location>
        <position position="18"/>
    </location>
</feature>
<feature type="lipid moiety-binding region" description="S-diacylglycerol cysteine" evidence="2">
    <location>
        <position position="18"/>
    </location>
</feature>
<name>GLPO_MYCGE</name>
<protein>
    <recommendedName>
        <fullName evidence="1">Glycerol 3-phosphate oxidase</fullName>
        <shortName>GlpO</shortName>
        <ecNumber evidence="1">1.1.3.21</ecNumber>
    </recommendedName>
    <alternativeName>
        <fullName>L-alpha-glycerophosphate oxidase</fullName>
    </alternativeName>
</protein>
<proteinExistence type="inferred from homology"/>
<sequence>MQTIDVLIVGGGVIGTSCAYELSQYKLKVALLEKNAFLGCETSQANSGVIHSGIDPNPNKLTAKYNILGRKIWIEDWFKKLIFPRKKIATLIVAFNNEEKLQLNLLKERGIKNSIPVENIQILDQQQTLLQEPFINPNVVASLKVEGSWLIDPLIATKCLALASLQNNVAIYSNKKVTKIEIDSDDDFLVFINNETTPQFKTKKLIDAAGHYADWLAETTQVDNFKQTTRKGQYLVLKNQNNLKINTIIFMVPTIHGKGVVVAEMLDGNILVGPNAVEGIEKNKTRSIDLDSINQIKTIGKKMVPSLQFENSIYSFAGSRAIDIETNDFVIRTAKSNPNFIILGGMKSPGLTSSPAIAKRAVELLNLKLKKKINWNPNYNLSWI</sequence>
<dbReference type="EC" id="1.1.3.21" evidence="1"/>
<dbReference type="EMBL" id="L43967">
    <property type="protein sequence ID" value="AAC71255.1"/>
    <property type="molecule type" value="Genomic_DNA"/>
</dbReference>
<dbReference type="PIR" id="C64204">
    <property type="entry name" value="C64204"/>
</dbReference>
<dbReference type="RefSeq" id="WP_010869301.1">
    <property type="nucleotide sequence ID" value="NC_000908.2"/>
</dbReference>
<dbReference type="SMR" id="P47285"/>
<dbReference type="FunCoup" id="P47285">
    <property type="interactions" value="155"/>
</dbReference>
<dbReference type="STRING" id="243273.MG_039"/>
<dbReference type="GeneID" id="88282154"/>
<dbReference type="KEGG" id="mge:MG_039"/>
<dbReference type="eggNOG" id="COG0579">
    <property type="taxonomic scope" value="Bacteria"/>
</dbReference>
<dbReference type="HOGENOM" id="CLU_024775_3_0_14"/>
<dbReference type="InParanoid" id="P47285"/>
<dbReference type="OrthoDB" id="9801699at2"/>
<dbReference type="BioCyc" id="MGEN243273:G1GJ2-39-MONOMER"/>
<dbReference type="UniPathway" id="UPA00618">
    <property type="reaction ID" value="UER00674"/>
</dbReference>
<dbReference type="Proteomes" id="UP000000807">
    <property type="component" value="Chromosome"/>
</dbReference>
<dbReference type="GO" id="GO:0005737">
    <property type="term" value="C:cytoplasm"/>
    <property type="evidence" value="ECO:0007669"/>
    <property type="project" value="UniProtKB-SubCell"/>
</dbReference>
<dbReference type="GO" id="GO:0005886">
    <property type="term" value="C:plasma membrane"/>
    <property type="evidence" value="ECO:0007669"/>
    <property type="project" value="UniProtKB-SubCell"/>
</dbReference>
<dbReference type="GO" id="GO:0016491">
    <property type="term" value="F:oxidoreductase activity"/>
    <property type="evidence" value="ECO:0007669"/>
    <property type="project" value="UniProtKB-KW"/>
</dbReference>
<dbReference type="GO" id="GO:0019563">
    <property type="term" value="P:glycerol catabolic process"/>
    <property type="evidence" value="ECO:0007669"/>
    <property type="project" value="UniProtKB-UniPathway"/>
</dbReference>
<dbReference type="Gene3D" id="3.30.9.10">
    <property type="entry name" value="D-Amino Acid Oxidase, subunit A, domain 2"/>
    <property type="match status" value="1"/>
</dbReference>
<dbReference type="Gene3D" id="3.50.50.60">
    <property type="entry name" value="FAD/NAD(P)-binding domain"/>
    <property type="match status" value="1"/>
</dbReference>
<dbReference type="InterPro" id="IPR006076">
    <property type="entry name" value="FAD-dep_OxRdtase"/>
</dbReference>
<dbReference type="InterPro" id="IPR036188">
    <property type="entry name" value="FAD/NAD-bd_sf"/>
</dbReference>
<dbReference type="InterPro" id="IPR052745">
    <property type="entry name" value="G3P_Oxidase/Oxidoreductase"/>
</dbReference>
<dbReference type="NCBIfam" id="NF033460">
    <property type="entry name" value="glycerol3P_ox_II"/>
    <property type="match status" value="1"/>
</dbReference>
<dbReference type="PANTHER" id="PTHR42720:SF1">
    <property type="entry name" value="GLYCEROL 3-PHOSPHATE OXIDASE"/>
    <property type="match status" value="1"/>
</dbReference>
<dbReference type="PANTHER" id="PTHR42720">
    <property type="entry name" value="GLYCEROL-3-PHOSPHATE DEHYDROGENASE"/>
    <property type="match status" value="1"/>
</dbReference>
<dbReference type="Pfam" id="PF01266">
    <property type="entry name" value="DAO"/>
    <property type="match status" value="1"/>
</dbReference>
<dbReference type="SUPFAM" id="SSF51905">
    <property type="entry name" value="FAD/NAD(P)-binding domain"/>
    <property type="match status" value="1"/>
</dbReference>
<evidence type="ECO:0000250" key="1">
    <source>
        <dbReference type="UniProtKB" id="P75063"/>
    </source>
</evidence>
<evidence type="ECO:0000255" key="2">
    <source>
        <dbReference type="PROSITE-ProRule" id="PRU00303"/>
    </source>
</evidence>